<evidence type="ECO:0000250" key="1">
    <source>
        <dbReference type="UniProtKB" id="P36394"/>
    </source>
</evidence>
<evidence type="ECO:0000250" key="2">
    <source>
        <dbReference type="UniProtKB" id="Q05066"/>
    </source>
</evidence>
<evidence type="ECO:0000255" key="3">
    <source>
        <dbReference type="PROSITE-ProRule" id="PRU00267"/>
    </source>
</evidence>
<evidence type="ECO:0000256" key="4">
    <source>
        <dbReference type="SAM" id="MobiDB-lite"/>
    </source>
</evidence>
<evidence type="ECO:0000305" key="5"/>
<feature type="chain" id="PRO_0000048710" description="Sex-determining region Y protein">
    <location>
        <begin position="1"/>
        <end position="232"/>
    </location>
</feature>
<feature type="DNA-binding region" description="HMG box" evidence="3">
    <location>
        <begin position="54"/>
        <end position="122"/>
    </location>
</feature>
<feature type="region of interest" description="Disordered" evidence="4">
    <location>
        <begin position="117"/>
        <end position="141"/>
    </location>
</feature>
<feature type="region of interest" description="Disordered" evidence="4">
    <location>
        <begin position="170"/>
        <end position="189"/>
    </location>
</feature>
<feature type="compositionally biased region" description="Polar residues" evidence="4">
    <location>
        <begin position="176"/>
        <end position="189"/>
    </location>
</feature>
<feature type="sequence conflict" description="In Ref. 2; CAB37858." evidence="5" ref="2">
    <original>Q</original>
    <variation>K</variation>
    <location>
        <position position="78"/>
    </location>
</feature>
<gene>
    <name type="primary">SRY</name>
    <name type="synonym">TDF</name>
</gene>
<keyword id="KW-0010">Activator</keyword>
<keyword id="KW-0112">Calmodulin-binding</keyword>
<keyword id="KW-0963">Cytoplasm</keyword>
<keyword id="KW-0221">Differentiation</keyword>
<keyword id="KW-0238">DNA-binding</keyword>
<keyword id="KW-0539">Nucleus</keyword>
<keyword id="KW-0678">Repressor</keyword>
<keyword id="KW-0726">Sexual differentiation</keyword>
<keyword id="KW-0804">Transcription</keyword>
<keyword id="KW-0805">Transcription regulation</keyword>
<accession>P36396</accession>
<accession>Q6TC29</accession>
<sequence length="232" mass="27195">MFGVLNSDDHCAAVQQRNILAFGRTFSEFWMNNPTSNYRCETEGNSRDSGQNRVRRPMNAFMLWSRDQRRKVALENPQMQNSEISKQLGYQWEMLTEAEKWPFFEEAQRLQAMHRQKYPDYKYRPRRKATPQKDDKLLPSASSSTLCRQVRVDETWYPFTYRNSHTRAAHSGMEDQLSSSQPVNVASSLLQQEQHCSSTSFRDSRETLATQLWADPPFYPKQQLGLSDAYFP</sequence>
<organism>
    <name type="scientific">Ursus arctos</name>
    <name type="common">Brown bear</name>
    <name type="synonym">Grizzly bear</name>
    <dbReference type="NCBI Taxonomy" id="9644"/>
    <lineage>
        <taxon>Eukaryota</taxon>
        <taxon>Metazoa</taxon>
        <taxon>Chordata</taxon>
        <taxon>Craniata</taxon>
        <taxon>Vertebrata</taxon>
        <taxon>Euteleostomi</taxon>
        <taxon>Mammalia</taxon>
        <taxon>Eutheria</taxon>
        <taxon>Laurasiatheria</taxon>
        <taxon>Carnivora</taxon>
        <taxon>Caniformia</taxon>
        <taxon>Ursidae</taxon>
        <taxon>Ursus</taxon>
    </lineage>
</organism>
<reference key="1">
    <citation type="submission" date="2003-09" db="EMBL/GenBank/DDBJ databases">
        <title>A phylogeny of the pinnipeds from mitochondrial and single copy nuclear gene sequences.</title>
        <authorList>
            <person name="Kinnear M.W."/>
            <person name="Walker G."/>
            <person name="Amos W."/>
        </authorList>
    </citation>
    <scope>NUCLEOTIDE SEQUENCE [GENOMIC DNA]</scope>
</reference>
<reference key="2">
    <citation type="journal article" date="1993" name="Mol. Ecol.">
        <title>Sexing free-ranging brown bears Ursus arctos using hairs found in the field.</title>
        <authorList>
            <person name="Taberlet P."/>
            <person name="Mattock H."/>
            <person name="Dubois-Paganon C."/>
            <person name="Bouvet J."/>
        </authorList>
    </citation>
    <scope>NUCLEOTIDE SEQUENCE [GENOMIC DNA] OF 66-82</scope>
</reference>
<dbReference type="EMBL" id="AY424666">
    <property type="protein sequence ID" value="AAR10377.1"/>
    <property type="molecule type" value="Genomic_DNA"/>
</dbReference>
<dbReference type="EMBL" id="X74007">
    <property type="protein sequence ID" value="CAB37858.1"/>
    <property type="molecule type" value="Genomic_DNA"/>
</dbReference>
<dbReference type="SMR" id="P36396"/>
<dbReference type="GO" id="GO:0005737">
    <property type="term" value="C:cytoplasm"/>
    <property type="evidence" value="ECO:0007669"/>
    <property type="project" value="UniProtKB-SubCell"/>
</dbReference>
<dbReference type="GO" id="GO:0016607">
    <property type="term" value="C:nuclear speck"/>
    <property type="evidence" value="ECO:0007669"/>
    <property type="project" value="UniProtKB-SubCell"/>
</dbReference>
<dbReference type="GO" id="GO:0005634">
    <property type="term" value="C:nucleus"/>
    <property type="evidence" value="ECO:0000250"/>
    <property type="project" value="UniProtKB"/>
</dbReference>
<dbReference type="GO" id="GO:0005516">
    <property type="term" value="F:calmodulin binding"/>
    <property type="evidence" value="ECO:0007669"/>
    <property type="project" value="UniProtKB-KW"/>
</dbReference>
<dbReference type="GO" id="GO:0001228">
    <property type="term" value="F:DNA-binding transcription activator activity, RNA polymerase II-specific"/>
    <property type="evidence" value="ECO:0007669"/>
    <property type="project" value="TreeGrafter"/>
</dbReference>
<dbReference type="GO" id="GO:0000978">
    <property type="term" value="F:RNA polymerase II cis-regulatory region sequence-specific DNA binding"/>
    <property type="evidence" value="ECO:0007669"/>
    <property type="project" value="TreeGrafter"/>
</dbReference>
<dbReference type="GO" id="GO:0030154">
    <property type="term" value="P:cell differentiation"/>
    <property type="evidence" value="ECO:0007669"/>
    <property type="project" value="UniProtKB-KW"/>
</dbReference>
<dbReference type="GO" id="GO:0030238">
    <property type="term" value="P:male sex determination"/>
    <property type="evidence" value="ECO:0007669"/>
    <property type="project" value="InterPro"/>
</dbReference>
<dbReference type="GO" id="GO:0007548">
    <property type="term" value="P:sex differentiation"/>
    <property type="evidence" value="ECO:0007669"/>
    <property type="project" value="UniProtKB-KW"/>
</dbReference>
<dbReference type="CDD" id="cd22034">
    <property type="entry name" value="HMG-box_SoxA_SRY"/>
    <property type="match status" value="1"/>
</dbReference>
<dbReference type="FunFam" id="1.10.30.10:FF:000002">
    <property type="entry name" value="transcription factor Sox-2"/>
    <property type="match status" value="1"/>
</dbReference>
<dbReference type="Gene3D" id="1.10.30.10">
    <property type="entry name" value="High mobility group box domain"/>
    <property type="match status" value="1"/>
</dbReference>
<dbReference type="InterPro" id="IPR009071">
    <property type="entry name" value="HMG_box_dom"/>
</dbReference>
<dbReference type="InterPro" id="IPR036910">
    <property type="entry name" value="HMG_box_dom_sf"/>
</dbReference>
<dbReference type="InterPro" id="IPR017253">
    <property type="entry name" value="SRY"/>
</dbReference>
<dbReference type="InterPro" id="IPR050140">
    <property type="entry name" value="SRY-related_HMG-box_TF-like"/>
</dbReference>
<dbReference type="PANTHER" id="PTHR10270:SF161">
    <property type="entry name" value="SEX-DETERMINING REGION Y PROTEIN"/>
    <property type="match status" value="1"/>
</dbReference>
<dbReference type="PANTHER" id="PTHR10270">
    <property type="entry name" value="SOX TRANSCRIPTION FACTOR"/>
    <property type="match status" value="1"/>
</dbReference>
<dbReference type="Pfam" id="PF00505">
    <property type="entry name" value="HMG_box"/>
    <property type="match status" value="1"/>
</dbReference>
<dbReference type="PIRSF" id="PIRSF037653">
    <property type="entry name" value="SRY"/>
    <property type="match status" value="1"/>
</dbReference>
<dbReference type="SMART" id="SM00398">
    <property type="entry name" value="HMG"/>
    <property type="match status" value="1"/>
</dbReference>
<dbReference type="SUPFAM" id="SSF47095">
    <property type="entry name" value="HMG-box"/>
    <property type="match status" value="1"/>
</dbReference>
<dbReference type="PROSITE" id="PS50118">
    <property type="entry name" value="HMG_BOX_2"/>
    <property type="match status" value="1"/>
</dbReference>
<comment type="function">
    <text evidence="1 2">Transcriptional regulator that controls a genetic switch in male development. It is necessary and sufficient for initiating male sex determination by directing the development of supporting cell precursors (pre-Sertoli cells) as Sertoli rather than granulosa cells. Involved in different aspects of gene regulation including promoter activation or repression. Binds to the DNA consensus sequence 5'-[AT]AACAA[AT]-3'. SRY HMG box recognizes DNA by partial intercalation in the minor groove and promotes DNA bending. Also involved in pre-mRNA splicing (By similarity). In male adult brain involved in the maintenance of motor functions of dopaminergic neurons (By similarity).</text>
</comment>
<comment type="subunit">
    <text evidence="2">Interacts with CALM, EP300, HDAC3, KPNB1, ZNF208 isoform KRAB-O, PARP1, SLC9A3R2 and WT1. The interaction with EP300 modulates its DNA-binding activity. The interaction with KPNB1 is sensitive to dissociation by Ran in the GTP-bound form. Interaction with PARP1 impaired its DNA-binding activity.</text>
</comment>
<comment type="subcellular location">
    <subcellularLocation>
        <location evidence="2">Nucleus speckle</location>
    </subcellularLocation>
    <subcellularLocation>
        <location evidence="2">Cytoplasm</location>
    </subcellularLocation>
    <subcellularLocation>
        <location evidence="2">Nucleus</location>
    </subcellularLocation>
</comment>
<comment type="similarity">
    <text evidence="5">Belongs to the SRY family.</text>
</comment>
<comment type="online information" name="Protein Spotlight">
    <link uri="https://www.proteinspotlight.org/back_issues/080"/>
    <text>The tenuous nature of sex - Issue 80 of March 2007</text>
</comment>
<name>SRY_URSAR</name>
<proteinExistence type="inferred from homology"/>
<protein>
    <recommendedName>
        <fullName>Sex-determining region Y protein</fullName>
    </recommendedName>
    <alternativeName>
        <fullName>Testis-determining factor</fullName>
    </alternativeName>
</protein>